<protein>
    <recommendedName>
        <fullName evidence="1">ATP-dependent Clp protease proteolytic subunit</fullName>
        <ecNumber evidence="1">3.4.21.92</ecNumber>
    </recommendedName>
    <alternativeName>
        <fullName evidence="1">Endopeptidase Clp</fullName>
    </alternativeName>
</protein>
<organism>
    <name type="scientific">Yersinia pestis bv. Antiqua (strain Antiqua)</name>
    <dbReference type="NCBI Taxonomy" id="360102"/>
    <lineage>
        <taxon>Bacteria</taxon>
        <taxon>Pseudomonadati</taxon>
        <taxon>Pseudomonadota</taxon>
        <taxon>Gammaproteobacteria</taxon>
        <taxon>Enterobacterales</taxon>
        <taxon>Yersiniaceae</taxon>
        <taxon>Yersinia</taxon>
    </lineage>
</organism>
<name>CLPP_YERPA</name>
<keyword id="KW-0963">Cytoplasm</keyword>
<keyword id="KW-0378">Hydrolase</keyword>
<keyword id="KW-0645">Protease</keyword>
<keyword id="KW-0720">Serine protease</keyword>
<gene>
    <name evidence="1" type="primary">clpP</name>
    <name type="ordered locus">YPA_2652</name>
</gene>
<sequence>MSYSGERDQFAPNMALVPMVVEQTSRGERSYDIFSRLLKERIIFLTGQVEDHMANLITAQMLFLEAENPEKDIFLYINSPGGVITAGMSIYDTMQFIKPDVSTICMGQACSMGAFLLTAGAKGKRFCLPNSRVMIHQPLGGFQGQATDIEIHAKEILKVKSRMNELMAYHTGKSLEEIERDTERDRFLSAEQSVEYGLVDSVFTRRD</sequence>
<evidence type="ECO:0000255" key="1">
    <source>
        <dbReference type="HAMAP-Rule" id="MF_00444"/>
    </source>
</evidence>
<reference key="1">
    <citation type="journal article" date="2006" name="J. Bacteriol.">
        <title>Complete genome sequence of Yersinia pestis strains Antiqua and Nepal516: evidence of gene reduction in an emerging pathogen.</title>
        <authorList>
            <person name="Chain P.S.G."/>
            <person name="Hu P."/>
            <person name="Malfatti S.A."/>
            <person name="Radnedge L."/>
            <person name="Larimer F."/>
            <person name="Vergez L.M."/>
            <person name="Worsham P."/>
            <person name="Chu M.C."/>
            <person name="Andersen G.L."/>
        </authorList>
    </citation>
    <scope>NUCLEOTIDE SEQUENCE [LARGE SCALE GENOMIC DNA]</scope>
    <source>
        <strain>Antiqua</strain>
    </source>
</reference>
<accession>Q1C4K8</accession>
<proteinExistence type="inferred from homology"/>
<comment type="function">
    <text evidence="1">Cleaves peptides in various proteins in a process that requires ATP hydrolysis. Has a chymotrypsin-like activity. Plays a major role in the degradation of misfolded proteins.</text>
</comment>
<comment type="catalytic activity">
    <reaction evidence="1">
        <text>Hydrolysis of proteins to small peptides in the presence of ATP and magnesium. alpha-casein is the usual test substrate. In the absence of ATP, only oligopeptides shorter than five residues are hydrolyzed (such as succinyl-Leu-Tyr-|-NHMec, and Leu-Tyr-Leu-|-Tyr-Trp, in which cleavage of the -Tyr-|-Leu- and -Tyr-|-Trp bonds also occurs).</text>
        <dbReference type="EC" id="3.4.21.92"/>
    </reaction>
</comment>
<comment type="subunit">
    <text evidence="1">Fourteen ClpP subunits assemble into 2 heptameric rings which stack back to back to give a disk-like structure with a central cavity, resembling the structure of eukaryotic proteasomes.</text>
</comment>
<comment type="subcellular location">
    <subcellularLocation>
        <location evidence="1">Cytoplasm</location>
    </subcellularLocation>
</comment>
<comment type="similarity">
    <text evidence="1">Belongs to the peptidase S14 family.</text>
</comment>
<feature type="chain" id="PRO_1000026146" description="ATP-dependent Clp protease proteolytic subunit">
    <location>
        <begin position="1"/>
        <end position="207"/>
    </location>
</feature>
<feature type="active site" description="Nucleophile" evidence="1">
    <location>
        <position position="111"/>
    </location>
</feature>
<feature type="active site" evidence="1">
    <location>
        <position position="136"/>
    </location>
</feature>
<dbReference type="EC" id="3.4.21.92" evidence="1"/>
<dbReference type="EMBL" id="CP000308">
    <property type="protein sequence ID" value="ABG14614.1"/>
    <property type="molecule type" value="Genomic_DNA"/>
</dbReference>
<dbReference type="RefSeq" id="WP_002208642.1">
    <property type="nucleotide sequence ID" value="NZ_CP009906.1"/>
</dbReference>
<dbReference type="SMR" id="Q1C4K8"/>
<dbReference type="MEROPS" id="S14.001"/>
<dbReference type="GeneID" id="96664465"/>
<dbReference type="KEGG" id="ypa:YPA_2652"/>
<dbReference type="Proteomes" id="UP000001971">
    <property type="component" value="Chromosome"/>
</dbReference>
<dbReference type="GO" id="GO:0005737">
    <property type="term" value="C:cytoplasm"/>
    <property type="evidence" value="ECO:0007669"/>
    <property type="project" value="UniProtKB-SubCell"/>
</dbReference>
<dbReference type="GO" id="GO:0009368">
    <property type="term" value="C:endopeptidase Clp complex"/>
    <property type="evidence" value="ECO:0007669"/>
    <property type="project" value="TreeGrafter"/>
</dbReference>
<dbReference type="GO" id="GO:0004176">
    <property type="term" value="F:ATP-dependent peptidase activity"/>
    <property type="evidence" value="ECO:0007669"/>
    <property type="project" value="InterPro"/>
</dbReference>
<dbReference type="GO" id="GO:0051117">
    <property type="term" value="F:ATPase binding"/>
    <property type="evidence" value="ECO:0007669"/>
    <property type="project" value="TreeGrafter"/>
</dbReference>
<dbReference type="GO" id="GO:0004252">
    <property type="term" value="F:serine-type endopeptidase activity"/>
    <property type="evidence" value="ECO:0007669"/>
    <property type="project" value="UniProtKB-UniRule"/>
</dbReference>
<dbReference type="GO" id="GO:0006515">
    <property type="term" value="P:protein quality control for misfolded or incompletely synthesized proteins"/>
    <property type="evidence" value="ECO:0007669"/>
    <property type="project" value="TreeGrafter"/>
</dbReference>
<dbReference type="CDD" id="cd07017">
    <property type="entry name" value="S14_ClpP_2"/>
    <property type="match status" value="1"/>
</dbReference>
<dbReference type="FunFam" id="3.90.226.10:FF:000001">
    <property type="entry name" value="ATP-dependent Clp protease proteolytic subunit"/>
    <property type="match status" value="1"/>
</dbReference>
<dbReference type="Gene3D" id="3.90.226.10">
    <property type="entry name" value="2-enoyl-CoA Hydratase, Chain A, domain 1"/>
    <property type="match status" value="1"/>
</dbReference>
<dbReference type="HAMAP" id="MF_00444">
    <property type="entry name" value="ClpP"/>
    <property type="match status" value="1"/>
</dbReference>
<dbReference type="InterPro" id="IPR001907">
    <property type="entry name" value="ClpP"/>
</dbReference>
<dbReference type="InterPro" id="IPR029045">
    <property type="entry name" value="ClpP/crotonase-like_dom_sf"/>
</dbReference>
<dbReference type="InterPro" id="IPR023562">
    <property type="entry name" value="ClpP/TepA"/>
</dbReference>
<dbReference type="InterPro" id="IPR033135">
    <property type="entry name" value="ClpP_His_AS"/>
</dbReference>
<dbReference type="InterPro" id="IPR018215">
    <property type="entry name" value="ClpP_Ser_AS"/>
</dbReference>
<dbReference type="NCBIfam" id="TIGR00493">
    <property type="entry name" value="clpP"/>
    <property type="match status" value="1"/>
</dbReference>
<dbReference type="NCBIfam" id="NF001368">
    <property type="entry name" value="PRK00277.1"/>
    <property type="match status" value="1"/>
</dbReference>
<dbReference type="NCBIfam" id="NF009205">
    <property type="entry name" value="PRK12553.1"/>
    <property type="match status" value="1"/>
</dbReference>
<dbReference type="PANTHER" id="PTHR10381">
    <property type="entry name" value="ATP-DEPENDENT CLP PROTEASE PROTEOLYTIC SUBUNIT"/>
    <property type="match status" value="1"/>
</dbReference>
<dbReference type="PANTHER" id="PTHR10381:SF70">
    <property type="entry name" value="ATP-DEPENDENT CLP PROTEASE PROTEOLYTIC SUBUNIT"/>
    <property type="match status" value="1"/>
</dbReference>
<dbReference type="Pfam" id="PF00574">
    <property type="entry name" value="CLP_protease"/>
    <property type="match status" value="1"/>
</dbReference>
<dbReference type="PRINTS" id="PR00127">
    <property type="entry name" value="CLPPROTEASEP"/>
</dbReference>
<dbReference type="SUPFAM" id="SSF52096">
    <property type="entry name" value="ClpP/crotonase"/>
    <property type="match status" value="1"/>
</dbReference>
<dbReference type="PROSITE" id="PS00382">
    <property type="entry name" value="CLP_PROTEASE_HIS"/>
    <property type="match status" value="1"/>
</dbReference>
<dbReference type="PROSITE" id="PS00381">
    <property type="entry name" value="CLP_PROTEASE_SER"/>
    <property type="match status" value="1"/>
</dbReference>